<protein>
    <recommendedName>
        <fullName evidence="1">DNA-directed RNA polymerase subunit omega</fullName>
        <shortName evidence="1">RNAP omega subunit</shortName>
        <ecNumber evidence="1">2.7.7.6</ecNumber>
    </recommendedName>
    <alternativeName>
        <fullName evidence="1">RNA polymerase omega subunit</fullName>
    </alternativeName>
    <alternativeName>
        <fullName evidence="1">Transcriptase subunit omega</fullName>
    </alternativeName>
</protein>
<evidence type="ECO:0000255" key="1">
    <source>
        <dbReference type="HAMAP-Rule" id="MF_00366"/>
    </source>
</evidence>
<dbReference type="EC" id="2.7.7.6" evidence="1"/>
<dbReference type="EMBL" id="CP000359">
    <property type="protein sequence ID" value="ABF44555.1"/>
    <property type="molecule type" value="Genomic_DNA"/>
</dbReference>
<dbReference type="RefSeq" id="WP_011529401.1">
    <property type="nucleotide sequence ID" value="NC_008025.1"/>
</dbReference>
<dbReference type="SMR" id="Q1J1S9"/>
<dbReference type="STRING" id="319795.Dgeo_0252"/>
<dbReference type="KEGG" id="dge:Dgeo_0252"/>
<dbReference type="eggNOG" id="COG1758">
    <property type="taxonomic scope" value="Bacteria"/>
</dbReference>
<dbReference type="HOGENOM" id="CLU_2286878_0_0_0"/>
<dbReference type="Proteomes" id="UP000002431">
    <property type="component" value="Chromosome"/>
</dbReference>
<dbReference type="GO" id="GO:0000428">
    <property type="term" value="C:DNA-directed RNA polymerase complex"/>
    <property type="evidence" value="ECO:0007669"/>
    <property type="project" value="UniProtKB-KW"/>
</dbReference>
<dbReference type="GO" id="GO:0003677">
    <property type="term" value="F:DNA binding"/>
    <property type="evidence" value="ECO:0007669"/>
    <property type="project" value="UniProtKB-UniRule"/>
</dbReference>
<dbReference type="GO" id="GO:0003899">
    <property type="term" value="F:DNA-directed RNA polymerase activity"/>
    <property type="evidence" value="ECO:0007669"/>
    <property type="project" value="UniProtKB-UniRule"/>
</dbReference>
<dbReference type="GO" id="GO:0006351">
    <property type="term" value="P:DNA-templated transcription"/>
    <property type="evidence" value="ECO:0007669"/>
    <property type="project" value="UniProtKB-UniRule"/>
</dbReference>
<dbReference type="Gene3D" id="3.90.940.10">
    <property type="match status" value="1"/>
</dbReference>
<dbReference type="HAMAP" id="MF_00366">
    <property type="entry name" value="RNApol_bact_RpoZ"/>
    <property type="match status" value="1"/>
</dbReference>
<dbReference type="InterPro" id="IPR003716">
    <property type="entry name" value="DNA-dir_RNA_pol_omega"/>
</dbReference>
<dbReference type="InterPro" id="IPR006110">
    <property type="entry name" value="Pol_omega/Rpo6/RPB6"/>
</dbReference>
<dbReference type="InterPro" id="IPR036161">
    <property type="entry name" value="RPB6/omega-like_sf"/>
</dbReference>
<dbReference type="PANTHER" id="PTHR34476">
    <property type="entry name" value="DNA-DIRECTED RNA POLYMERASE SUBUNIT OMEGA"/>
    <property type="match status" value="1"/>
</dbReference>
<dbReference type="PANTHER" id="PTHR34476:SF1">
    <property type="entry name" value="DNA-DIRECTED RNA POLYMERASE SUBUNIT OMEGA"/>
    <property type="match status" value="1"/>
</dbReference>
<dbReference type="Pfam" id="PF01192">
    <property type="entry name" value="RNA_pol_Rpb6"/>
    <property type="match status" value="1"/>
</dbReference>
<dbReference type="SMART" id="SM01409">
    <property type="entry name" value="RNA_pol_Rpb6"/>
    <property type="match status" value="1"/>
</dbReference>
<dbReference type="SUPFAM" id="SSF63562">
    <property type="entry name" value="RPB6/omega subunit-like"/>
    <property type="match status" value="1"/>
</dbReference>
<comment type="function">
    <text evidence="1">Promotes RNA polymerase assembly. Latches the N- and C-terminal regions of the beta' subunit thereby facilitating its interaction with the beta and alpha subunits.</text>
</comment>
<comment type="catalytic activity">
    <reaction evidence="1">
        <text>RNA(n) + a ribonucleoside 5'-triphosphate = RNA(n+1) + diphosphate</text>
        <dbReference type="Rhea" id="RHEA:21248"/>
        <dbReference type="Rhea" id="RHEA-COMP:14527"/>
        <dbReference type="Rhea" id="RHEA-COMP:17342"/>
        <dbReference type="ChEBI" id="CHEBI:33019"/>
        <dbReference type="ChEBI" id="CHEBI:61557"/>
        <dbReference type="ChEBI" id="CHEBI:140395"/>
        <dbReference type="EC" id="2.7.7.6"/>
    </reaction>
</comment>
<comment type="subunit">
    <text evidence="1">The RNAP catalytic core consists of 2 alpha, 1 beta, 1 beta' and 1 omega subunit. When a sigma factor is associated with the core the holoenzyme is formed, which can initiate transcription.</text>
</comment>
<comment type="similarity">
    <text evidence="1">Belongs to the RNA polymerase subunit omega family.</text>
</comment>
<organism>
    <name type="scientific">Deinococcus geothermalis (strain DSM 11300 / CIP 105573 / AG-3a)</name>
    <dbReference type="NCBI Taxonomy" id="319795"/>
    <lineage>
        <taxon>Bacteria</taxon>
        <taxon>Thermotogati</taxon>
        <taxon>Deinococcota</taxon>
        <taxon>Deinococci</taxon>
        <taxon>Deinococcales</taxon>
        <taxon>Deinococcaceae</taxon>
        <taxon>Deinococcus</taxon>
    </lineage>
</organism>
<reference key="1">
    <citation type="submission" date="2006-04" db="EMBL/GenBank/DDBJ databases">
        <title>Complete sequence of chromosome of Deinococcus geothermalis DSM 11300.</title>
        <authorList>
            <person name="Copeland A."/>
            <person name="Lucas S."/>
            <person name="Lapidus A."/>
            <person name="Barry K."/>
            <person name="Detter J.C."/>
            <person name="Glavina del Rio T."/>
            <person name="Hammon N."/>
            <person name="Israni S."/>
            <person name="Dalin E."/>
            <person name="Tice H."/>
            <person name="Pitluck S."/>
            <person name="Brettin T."/>
            <person name="Bruce D."/>
            <person name="Han C."/>
            <person name="Tapia R."/>
            <person name="Saunders E."/>
            <person name="Gilna P."/>
            <person name="Schmutz J."/>
            <person name="Larimer F."/>
            <person name="Land M."/>
            <person name="Hauser L."/>
            <person name="Kyrpides N."/>
            <person name="Kim E."/>
            <person name="Daly M.J."/>
            <person name="Fredrickson J.K."/>
            <person name="Makarova K.S."/>
            <person name="Gaidamakova E.K."/>
            <person name="Zhai M."/>
            <person name="Richardson P."/>
        </authorList>
    </citation>
    <scope>NUCLEOTIDE SEQUENCE [LARGE SCALE GENOMIC DNA]</scope>
    <source>
        <strain>DSM 11300 / CIP 105573 / AG-3a</strain>
    </source>
</reference>
<name>RPOZ_DEIGD</name>
<gene>
    <name evidence="1" type="primary">rpoZ</name>
    <name type="ordered locus">Dgeo_0252</name>
</gene>
<proteinExistence type="inferred from homology"/>
<keyword id="KW-0240">DNA-directed RNA polymerase</keyword>
<keyword id="KW-0548">Nucleotidyltransferase</keyword>
<keyword id="KW-0804">Transcription</keyword>
<keyword id="KW-0808">Transferase</keyword>
<sequence length="99" mass="11350">MAEKDIDKLLSLTDSKYRLSVVIAKRALQLRSGAPSVLPVEQRVRTRNLVTQAMRELATGKLTVGTGLMDENRFHQDYVRQKQAQLQAQLNAERERERD</sequence>
<accession>Q1J1S9</accession>
<feature type="chain" id="PRO_1000005918" description="DNA-directed RNA polymerase subunit omega">
    <location>
        <begin position="1"/>
        <end position="99"/>
    </location>
</feature>